<gene>
    <name evidence="1" type="primary">tal</name>
    <name type="ordered locus">Dole_2486</name>
</gene>
<sequence length="214" mass="23040">MKFFIDTANIDEIKEAVKMGMADGVTTNPSLIAKESGDFETIIKNICDVVDGPVSAEVISLKTAGMVKEAKQLATLHENIVIKIPMTVDGLKAVRMLADQGIRTNVTLVFSPLQALMAAKAGATYVSPFVGRLDDLASDGMVLVEQIIDIYDNYAIDTEIIVASIRNPLHVLDAALMGADVATIPFGVLKKLAAHPLTDRGIDAFLNDWKKAKK</sequence>
<keyword id="KW-0963">Cytoplasm</keyword>
<keyword id="KW-0570">Pentose shunt</keyword>
<keyword id="KW-1185">Reference proteome</keyword>
<keyword id="KW-0704">Schiff base</keyword>
<keyword id="KW-0808">Transferase</keyword>
<organism>
    <name type="scientific">Desulfosudis oleivorans (strain DSM 6200 / JCM 39069 / Hxd3)</name>
    <name type="common">Desulfococcus oleovorans</name>
    <dbReference type="NCBI Taxonomy" id="96561"/>
    <lineage>
        <taxon>Bacteria</taxon>
        <taxon>Pseudomonadati</taxon>
        <taxon>Thermodesulfobacteriota</taxon>
        <taxon>Desulfobacteria</taxon>
        <taxon>Desulfobacterales</taxon>
        <taxon>Desulfosudaceae</taxon>
        <taxon>Desulfosudis</taxon>
    </lineage>
</organism>
<protein>
    <recommendedName>
        <fullName evidence="1">Probable transaldolase</fullName>
        <ecNumber evidence="1">2.2.1.2</ecNumber>
    </recommendedName>
</protein>
<evidence type="ECO:0000255" key="1">
    <source>
        <dbReference type="HAMAP-Rule" id="MF_00494"/>
    </source>
</evidence>
<accession>A8ZW56</accession>
<name>TAL_DESOH</name>
<dbReference type="EC" id="2.2.1.2" evidence="1"/>
<dbReference type="EMBL" id="CP000859">
    <property type="protein sequence ID" value="ABW68290.1"/>
    <property type="molecule type" value="Genomic_DNA"/>
</dbReference>
<dbReference type="RefSeq" id="WP_012175902.1">
    <property type="nucleotide sequence ID" value="NC_009943.1"/>
</dbReference>
<dbReference type="SMR" id="A8ZW56"/>
<dbReference type="STRING" id="96561.Dole_2486"/>
<dbReference type="KEGG" id="dol:Dole_2486"/>
<dbReference type="eggNOG" id="COG0176">
    <property type="taxonomic scope" value="Bacteria"/>
</dbReference>
<dbReference type="HOGENOM" id="CLU_079764_0_0_7"/>
<dbReference type="OrthoDB" id="9807051at2"/>
<dbReference type="UniPathway" id="UPA00115">
    <property type="reaction ID" value="UER00414"/>
</dbReference>
<dbReference type="Proteomes" id="UP000008561">
    <property type="component" value="Chromosome"/>
</dbReference>
<dbReference type="GO" id="GO:0005737">
    <property type="term" value="C:cytoplasm"/>
    <property type="evidence" value="ECO:0007669"/>
    <property type="project" value="UniProtKB-SubCell"/>
</dbReference>
<dbReference type="GO" id="GO:0016832">
    <property type="term" value="F:aldehyde-lyase activity"/>
    <property type="evidence" value="ECO:0007669"/>
    <property type="project" value="InterPro"/>
</dbReference>
<dbReference type="GO" id="GO:0004801">
    <property type="term" value="F:transaldolase activity"/>
    <property type="evidence" value="ECO:0007669"/>
    <property type="project" value="UniProtKB-UniRule"/>
</dbReference>
<dbReference type="GO" id="GO:0005975">
    <property type="term" value="P:carbohydrate metabolic process"/>
    <property type="evidence" value="ECO:0007669"/>
    <property type="project" value="InterPro"/>
</dbReference>
<dbReference type="GO" id="GO:0006098">
    <property type="term" value="P:pentose-phosphate shunt"/>
    <property type="evidence" value="ECO:0007669"/>
    <property type="project" value="UniProtKB-UniRule"/>
</dbReference>
<dbReference type="CDD" id="cd00956">
    <property type="entry name" value="Transaldolase_FSA"/>
    <property type="match status" value="1"/>
</dbReference>
<dbReference type="FunFam" id="3.20.20.70:FF:000018">
    <property type="entry name" value="Probable transaldolase"/>
    <property type="match status" value="1"/>
</dbReference>
<dbReference type="Gene3D" id="3.20.20.70">
    <property type="entry name" value="Aldolase class I"/>
    <property type="match status" value="1"/>
</dbReference>
<dbReference type="HAMAP" id="MF_00494">
    <property type="entry name" value="Transaldolase_3b"/>
    <property type="match status" value="1"/>
</dbReference>
<dbReference type="InterPro" id="IPR013785">
    <property type="entry name" value="Aldolase_TIM"/>
</dbReference>
<dbReference type="InterPro" id="IPR001585">
    <property type="entry name" value="TAL/FSA"/>
</dbReference>
<dbReference type="InterPro" id="IPR022999">
    <property type="entry name" value="Transaldolase_3B"/>
</dbReference>
<dbReference type="InterPro" id="IPR004731">
    <property type="entry name" value="Transaldolase_3B/F6P_aldolase"/>
</dbReference>
<dbReference type="InterPro" id="IPR018225">
    <property type="entry name" value="Transaldolase_AS"/>
</dbReference>
<dbReference type="InterPro" id="IPR033919">
    <property type="entry name" value="TSA/FSA_arc/bac"/>
</dbReference>
<dbReference type="NCBIfam" id="TIGR00875">
    <property type="entry name" value="fsa_talC_mipB"/>
    <property type="match status" value="1"/>
</dbReference>
<dbReference type="PANTHER" id="PTHR10683:SF40">
    <property type="entry name" value="FRUCTOSE-6-PHOSPHATE ALDOLASE 1-RELATED"/>
    <property type="match status" value="1"/>
</dbReference>
<dbReference type="PANTHER" id="PTHR10683">
    <property type="entry name" value="TRANSALDOLASE"/>
    <property type="match status" value="1"/>
</dbReference>
<dbReference type="Pfam" id="PF00923">
    <property type="entry name" value="TAL_FSA"/>
    <property type="match status" value="1"/>
</dbReference>
<dbReference type="SUPFAM" id="SSF51569">
    <property type="entry name" value="Aldolase"/>
    <property type="match status" value="1"/>
</dbReference>
<dbReference type="PROSITE" id="PS01054">
    <property type="entry name" value="TRANSALDOLASE_1"/>
    <property type="match status" value="1"/>
</dbReference>
<dbReference type="PROSITE" id="PS00958">
    <property type="entry name" value="TRANSALDOLASE_2"/>
    <property type="match status" value="1"/>
</dbReference>
<reference key="1">
    <citation type="submission" date="2007-10" db="EMBL/GenBank/DDBJ databases">
        <title>Complete sequence of Desulfococcus oleovorans Hxd3.</title>
        <authorList>
            <consortium name="US DOE Joint Genome Institute"/>
            <person name="Copeland A."/>
            <person name="Lucas S."/>
            <person name="Lapidus A."/>
            <person name="Barry K."/>
            <person name="Glavina del Rio T."/>
            <person name="Dalin E."/>
            <person name="Tice H."/>
            <person name="Pitluck S."/>
            <person name="Kiss H."/>
            <person name="Brettin T."/>
            <person name="Bruce D."/>
            <person name="Detter J.C."/>
            <person name="Han C."/>
            <person name="Schmutz J."/>
            <person name="Larimer F."/>
            <person name="Land M."/>
            <person name="Hauser L."/>
            <person name="Kyrpides N."/>
            <person name="Kim E."/>
            <person name="Wawrik B."/>
            <person name="Richardson P."/>
        </authorList>
    </citation>
    <scope>NUCLEOTIDE SEQUENCE [LARGE SCALE GENOMIC DNA]</scope>
    <source>
        <strain>DSM 6200 / JCM 39069 / Hxd3</strain>
    </source>
</reference>
<proteinExistence type="inferred from homology"/>
<comment type="function">
    <text evidence="1">Transaldolase is important for the balance of metabolites in the pentose-phosphate pathway.</text>
</comment>
<comment type="catalytic activity">
    <reaction evidence="1">
        <text>D-sedoheptulose 7-phosphate + D-glyceraldehyde 3-phosphate = D-erythrose 4-phosphate + beta-D-fructose 6-phosphate</text>
        <dbReference type="Rhea" id="RHEA:17053"/>
        <dbReference type="ChEBI" id="CHEBI:16897"/>
        <dbReference type="ChEBI" id="CHEBI:57483"/>
        <dbReference type="ChEBI" id="CHEBI:57634"/>
        <dbReference type="ChEBI" id="CHEBI:59776"/>
        <dbReference type="EC" id="2.2.1.2"/>
    </reaction>
</comment>
<comment type="pathway">
    <text evidence="1">Carbohydrate degradation; pentose phosphate pathway; D-glyceraldehyde 3-phosphate and beta-D-fructose 6-phosphate from D-ribose 5-phosphate and D-xylulose 5-phosphate (non-oxidative stage): step 2/3.</text>
</comment>
<comment type="subcellular location">
    <subcellularLocation>
        <location evidence="1">Cytoplasm</location>
    </subcellularLocation>
</comment>
<comment type="similarity">
    <text evidence="1">Belongs to the transaldolase family. Type 3B subfamily.</text>
</comment>
<feature type="chain" id="PRO_1000126309" description="Probable transaldolase">
    <location>
        <begin position="1"/>
        <end position="214"/>
    </location>
</feature>
<feature type="active site" description="Schiff-base intermediate with substrate" evidence="1">
    <location>
        <position position="83"/>
    </location>
</feature>